<feature type="chain" id="PRO_1000058165" description="Phosphopantetheine adenylyltransferase">
    <location>
        <begin position="1"/>
        <end position="173"/>
    </location>
</feature>
<feature type="binding site" evidence="1">
    <location>
        <begin position="9"/>
        <end position="10"/>
    </location>
    <ligand>
        <name>ATP</name>
        <dbReference type="ChEBI" id="CHEBI:30616"/>
    </ligand>
</feature>
<feature type="binding site" evidence="1">
    <location>
        <position position="9"/>
    </location>
    <ligand>
        <name>substrate</name>
    </ligand>
</feature>
<feature type="binding site" evidence="1">
    <location>
        <position position="17"/>
    </location>
    <ligand>
        <name>ATP</name>
        <dbReference type="ChEBI" id="CHEBI:30616"/>
    </ligand>
</feature>
<feature type="binding site" evidence="1">
    <location>
        <position position="41"/>
    </location>
    <ligand>
        <name>substrate</name>
    </ligand>
</feature>
<feature type="binding site" evidence="1">
    <location>
        <position position="73"/>
    </location>
    <ligand>
        <name>substrate</name>
    </ligand>
</feature>
<feature type="binding site" evidence="1">
    <location>
        <position position="87"/>
    </location>
    <ligand>
        <name>substrate</name>
    </ligand>
</feature>
<feature type="binding site" evidence="1">
    <location>
        <begin position="88"/>
        <end position="90"/>
    </location>
    <ligand>
        <name>ATP</name>
        <dbReference type="ChEBI" id="CHEBI:30616"/>
    </ligand>
</feature>
<feature type="binding site" evidence="1">
    <location>
        <position position="98"/>
    </location>
    <ligand>
        <name>ATP</name>
        <dbReference type="ChEBI" id="CHEBI:30616"/>
    </ligand>
</feature>
<feature type="binding site" evidence="1">
    <location>
        <begin position="123"/>
        <end position="129"/>
    </location>
    <ligand>
        <name>ATP</name>
        <dbReference type="ChEBI" id="CHEBI:30616"/>
    </ligand>
</feature>
<feature type="site" description="Transition state stabilizer" evidence="1">
    <location>
        <position position="17"/>
    </location>
</feature>
<dbReference type="EC" id="2.7.7.3" evidence="1"/>
<dbReference type="EMBL" id="CP000705">
    <property type="protein sequence ID" value="ABQ82906.1"/>
    <property type="molecule type" value="Genomic_DNA"/>
</dbReference>
<dbReference type="RefSeq" id="WP_003668252.1">
    <property type="nucleotide sequence ID" value="NZ_AZDD01000002.1"/>
</dbReference>
<dbReference type="SMR" id="A5VJ82"/>
<dbReference type="STRING" id="557436.Lreu_0641"/>
<dbReference type="GeneID" id="77190812"/>
<dbReference type="KEGG" id="lre:Lreu_0641"/>
<dbReference type="PATRIC" id="fig|557436.17.peg.713"/>
<dbReference type="eggNOG" id="COG0669">
    <property type="taxonomic scope" value="Bacteria"/>
</dbReference>
<dbReference type="HOGENOM" id="CLU_100149_1_1_9"/>
<dbReference type="UniPathway" id="UPA00241">
    <property type="reaction ID" value="UER00355"/>
</dbReference>
<dbReference type="Proteomes" id="UP000001991">
    <property type="component" value="Chromosome"/>
</dbReference>
<dbReference type="GO" id="GO:0005737">
    <property type="term" value="C:cytoplasm"/>
    <property type="evidence" value="ECO:0007669"/>
    <property type="project" value="UniProtKB-SubCell"/>
</dbReference>
<dbReference type="GO" id="GO:0005524">
    <property type="term" value="F:ATP binding"/>
    <property type="evidence" value="ECO:0007669"/>
    <property type="project" value="UniProtKB-KW"/>
</dbReference>
<dbReference type="GO" id="GO:0004595">
    <property type="term" value="F:pantetheine-phosphate adenylyltransferase activity"/>
    <property type="evidence" value="ECO:0007669"/>
    <property type="project" value="UniProtKB-UniRule"/>
</dbReference>
<dbReference type="GO" id="GO:0015937">
    <property type="term" value="P:coenzyme A biosynthetic process"/>
    <property type="evidence" value="ECO:0007669"/>
    <property type="project" value="UniProtKB-UniRule"/>
</dbReference>
<dbReference type="CDD" id="cd02163">
    <property type="entry name" value="PPAT"/>
    <property type="match status" value="1"/>
</dbReference>
<dbReference type="Gene3D" id="3.40.50.620">
    <property type="entry name" value="HUPs"/>
    <property type="match status" value="1"/>
</dbReference>
<dbReference type="HAMAP" id="MF_00151">
    <property type="entry name" value="PPAT_bact"/>
    <property type="match status" value="1"/>
</dbReference>
<dbReference type="InterPro" id="IPR004821">
    <property type="entry name" value="Cyt_trans-like"/>
</dbReference>
<dbReference type="InterPro" id="IPR001980">
    <property type="entry name" value="PPAT"/>
</dbReference>
<dbReference type="InterPro" id="IPR014729">
    <property type="entry name" value="Rossmann-like_a/b/a_fold"/>
</dbReference>
<dbReference type="NCBIfam" id="TIGR01510">
    <property type="entry name" value="coaD_prev_kdtB"/>
    <property type="match status" value="1"/>
</dbReference>
<dbReference type="NCBIfam" id="TIGR00125">
    <property type="entry name" value="cyt_tran_rel"/>
    <property type="match status" value="1"/>
</dbReference>
<dbReference type="PANTHER" id="PTHR21342">
    <property type="entry name" value="PHOSPHOPANTETHEINE ADENYLYLTRANSFERASE"/>
    <property type="match status" value="1"/>
</dbReference>
<dbReference type="PANTHER" id="PTHR21342:SF1">
    <property type="entry name" value="PHOSPHOPANTETHEINE ADENYLYLTRANSFERASE"/>
    <property type="match status" value="1"/>
</dbReference>
<dbReference type="Pfam" id="PF01467">
    <property type="entry name" value="CTP_transf_like"/>
    <property type="match status" value="1"/>
</dbReference>
<dbReference type="PRINTS" id="PR01020">
    <property type="entry name" value="LPSBIOSNTHSS"/>
</dbReference>
<dbReference type="SUPFAM" id="SSF52374">
    <property type="entry name" value="Nucleotidylyl transferase"/>
    <property type="match status" value="1"/>
</dbReference>
<protein>
    <recommendedName>
        <fullName evidence="1">Phosphopantetheine adenylyltransferase</fullName>
        <ecNumber evidence="1">2.7.7.3</ecNumber>
    </recommendedName>
    <alternativeName>
        <fullName evidence="1">Dephospho-CoA pyrophosphorylase</fullName>
    </alternativeName>
    <alternativeName>
        <fullName evidence="1">Pantetheine-phosphate adenylyltransferase</fullName>
        <shortName evidence="1">PPAT</shortName>
    </alternativeName>
</protein>
<proteinExistence type="inferred from homology"/>
<organism>
    <name type="scientific">Limosilactobacillus reuteri (strain DSM 20016)</name>
    <name type="common">Lactobacillus reuteri</name>
    <dbReference type="NCBI Taxonomy" id="557436"/>
    <lineage>
        <taxon>Bacteria</taxon>
        <taxon>Bacillati</taxon>
        <taxon>Bacillota</taxon>
        <taxon>Bacilli</taxon>
        <taxon>Lactobacillales</taxon>
        <taxon>Lactobacillaceae</taxon>
        <taxon>Limosilactobacillus</taxon>
    </lineage>
</organism>
<reference key="1">
    <citation type="journal article" date="2011" name="PLoS Genet.">
        <title>The evolution of host specialization in the vertebrate gut symbiont Lactobacillus reuteri.</title>
        <authorList>
            <person name="Frese S.A."/>
            <person name="Benson A.K."/>
            <person name="Tannock G.W."/>
            <person name="Loach D.M."/>
            <person name="Kim J."/>
            <person name="Zhang M."/>
            <person name="Oh P.L."/>
            <person name="Heng N.C."/>
            <person name="Patil P.B."/>
            <person name="Juge N."/>
            <person name="Mackenzie D.A."/>
            <person name="Pearson B.M."/>
            <person name="Lapidus A."/>
            <person name="Dalin E."/>
            <person name="Tice H."/>
            <person name="Goltsman E."/>
            <person name="Land M."/>
            <person name="Hauser L."/>
            <person name="Ivanova N."/>
            <person name="Kyrpides N.C."/>
            <person name="Walter J."/>
        </authorList>
    </citation>
    <scope>NUCLEOTIDE SEQUENCE [LARGE SCALE GENOMIC DNA]</scope>
    <source>
        <strain>DSM 20016</strain>
    </source>
</reference>
<name>COAD_LIMRD</name>
<gene>
    <name evidence="1" type="primary">coaD</name>
    <name type="ordered locus">Lreu_0641</name>
</gene>
<comment type="function">
    <text evidence="1">Reversibly transfers an adenylyl group from ATP to 4'-phosphopantetheine, yielding dephospho-CoA (dPCoA) and pyrophosphate.</text>
</comment>
<comment type="catalytic activity">
    <reaction evidence="1">
        <text>(R)-4'-phosphopantetheine + ATP + H(+) = 3'-dephospho-CoA + diphosphate</text>
        <dbReference type="Rhea" id="RHEA:19801"/>
        <dbReference type="ChEBI" id="CHEBI:15378"/>
        <dbReference type="ChEBI" id="CHEBI:30616"/>
        <dbReference type="ChEBI" id="CHEBI:33019"/>
        <dbReference type="ChEBI" id="CHEBI:57328"/>
        <dbReference type="ChEBI" id="CHEBI:61723"/>
        <dbReference type="EC" id="2.7.7.3"/>
    </reaction>
</comment>
<comment type="cofactor">
    <cofactor evidence="1">
        <name>Mg(2+)</name>
        <dbReference type="ChEBI" id="CHEBI:18420"/>
    </cofactor>
</comment>
<comment type="pathway">
    <text evidence="1">Cofactor biosynthesis; coenzyme A biosynthesis; CoA from (R)-pantothenate: step 4/5.</text>
</comment>
<comment type="subunit">
    <text evidence="1">Homohexamer.</text>
</comment>
<comment type="subcellular location">
    <subcellularLocation>
        <location evidence="1">Cytoplasm</location>
    </subcellularLocation>
</comment>
<comment type="similarity">
    <text evidence="1">Belongs to the bacterial CoaD family.</text>
</comment>
<sequence length="173" mass="19361">MKVAVFPGSFDPLTLGHLDLIKRGSALFDQLAVAVMTNESKNPLFTVEERVAQIKEAVSGLDNVSVITTEGLTVDLMNRIGADYLMRGLRNTTDFQYERDIAAMNNFLDDQCETVFFLAKPEYQHLSSSLLKEVTSAGGDISAYLPANINEALKKRLMEREMLRVKKDNEKAR</sequence>
<evidence type="ECO:0000255" key="1">
    <source>
        <dbReference type="HAMAP-Rule" id="MF_00151"/>
    </source>
</evidence>
<accession>A5VJ82</accession>
<keyword id="KW-0067">ATP-binding</keyword>
<keyword id="KW-0173">Coenzyme A biosynthesis</keyword>
<keyword id="KW-0963">Cytoplasm</keyword>
<keyword id="KW-0460">Magnesium</keyword>
<keyword id="KW-0547">Nucleotide-binding</keyword>
<keyword id="KW-0548">Nucleotidyltransferase</keyword>
<keyword id="KW-1185">Reference proteome</keyword>
<keyword id="KW-0808">Transferase</keyword>